<feature type="signal peptide" evidence="3">
    <location>
        <begin position="1"/>
        <end position="22"/>
    </location>
</feature>
<feature type="chain" id="PRO_0000011041" description="Cytokine receptor-like factor 2">
    <location>
        <begin position="23"/>
        <end position="371"/>
    </location>
</feature>
<feature type="topological domain" description="Extracellular" evidence="3">
    <location>
        <begin position="23"/>
        <end position="231"/>
    </location>
</feature>
<feature type="transmembrane region" description="Helical" evidence="3">
    <location>
        <begin position="232"/>
        <end position="252"/>
    </location>
</feature>
<feature type="topological domain" description="Cytoplasmic" evidence="3">
    <location>
        <begin position="253"/>
        <end position="371"/>
    </location>
</feature>
<feature type="domain" description="Fibronectin type-III" evidence="4">
    <location>
        <begin position="118"/>
        <end position="211"/>
    </location>
</feature>
<feature type="region of interest" description="Disordered" evidence="5">
    <location>
        <begin position="322"/>
        <end position="347"/>
    </location>
</feature>
<feature type="short sequence motif" description="WSXWS motif">
    <location>
        <begin position="200"/>
        <end position="204"/>
    </location>
</feature>
<feature type="short sequence motif" description="Box 1 motif">
    <location>
        <begin position="261"/>
        <end position="269"/>
    </location>
</feature>
<feature type="compositionally biased region" description="Basic and acidic residues" evidence="5">
    <location>
        <begin position="322"/>
        <end position="336"/>
    </location>
</feature>
<feature type="glycosylation site" description="N-linked (GlcNAc...) asparagine" evidence="3">
    <location>
        <position position="47"/>
    </location>
</feature>
<feature type="glycosylation site" description="N-linked (GlcNAc...) asparagine" evidence="3">
    <location>
        <position position="55"/>
    </location>
</feature>
<feature type="glycosylation site" description="N-linked (GlcNAc...) asparagine" evidence="3">
    <location>
        <position position="101"/>
    </location>
</feature>
<feature type="glycosylation site" description="N-linked (GlcNAc...) asparagine" evidence="3">
    <location>
        <position position="169"/>
    </location>
</feature>
<feature type="disulfide bond" evidence="2">
    <location>
        <begin position="71"/>
        <end position="84"/>
    </location>
</feature>
<feature type="disulfide bond" evidence="2">
    <location>
        <begin position="180"/>
        <end position="218"/>
    </location>
</feature>
<feature type="splice variant" id="VSP_057463" description="In isoform 3." evidence="8">
    <location>
        <begin position="1"/>
        <end position="112"/>
    </location>
</feature>
<feature type="splice variant" id="VSP_008786" description="In isoform 2." evidence="7">
    <original>SKQENTCNVTIEGLDAEKCYSFWVRVKAMEDVYGPDTYPSDWSEVTCWQRGEIRDACAETPTPPKPKLSKFI</original>
    <variation>TQSRSVTQAGVQWCDLCLLQPSPPRFKRFSCLSLPSSWDYRHPPPRLANFCIISRDGVSPCWPGWSRTCDLR</variation>
    <location>
        <begin position="162"/>
        <end position="233"/>
    </location>
</feature>
<feature type="splice variant" id="VSP_008787" description="In isoform 2." evidence="7">
    <location>
        <begin position="234"/>
        <end position="371"/>
    </location>
</feature>
<feature type="sequence conflict" description="In Ref. 5; BAB15557." evidence="9" ref="5">
    <location>
        <position position="27"/>
    </location>
</feature>
<feature type="sequence conflict" description="In Ref. 4; AAW66851." ref="4">
    <original>K</original>
    <variation>R</variation>
    <location>
        <position position="258"/>
    </location>
</feature>
<feature type="sequence conflict" description="In Ref. 4; AAW66851." ref="4">
    <original>E</original>
    <variation>G</variation>
    <location>
        <position position="305"/>
    </location>
</feature>
<feature type="sequence conflict" description="In Ref. 4; AAW66851." ref="4">
    <original>G</original>
    <variation>D</variation>
    <location>
        <position position="358"/>
    </location>
</feature>
<feature type="strand" evidence="10">
    <location>
        <begin position="31"/>
        <end position="37"/>
    </location>
</feature>
<feature type="turn" evidence="10">
    <location>
        <begin position="38"/>
        <end position="40"/>
    </location>
</feature>
<feature type="strand" evidence="10">
    <location>
        <begin position="41"/>
        <end position="47"/>
    </location>
</feature>
<feature type="helix" evidence="10">
    <location>
        <begin position="49"/>
        <end position="51"/>
    </location>
</feature>
<feature type="strand" evidence="10">
    <location>
        <begin position="57"/>
        <end position="63"/>
    </location>
</feature>
<feature type="strand" evidence="10">
    <location>
        <begin position="72"/>
        <end position="77"/>
    </location>
</feature>
<feature type="strand" evidence="10">
    <location>
        <begin position="80"/>
        <end position="87"/>
    </location>
</feature>
<feature type="strand" evidence="10">
    <location>
        <begin position="94"/>
        <end position="101"/>
    </location>
</feature>
<feature type="strand" evidence="10">
    <location>
        <begin position="104"/>
        <end position="112"/>
    </location>
</feature>
<feature type="helix" evidence="10">
    <location>
        <begin position="113"/>
        <end position="116"/>
    </location>
</feature>
<feature type="strand" evidence="10">
    <location>
        <begin position="126"/>
        <end position="129"/>
    </location>
</feature>
<feature type="strand" evidence="10">
    <location>
        <begin position="131"/>
        <end position="137"/>
    </location>
</feature>
<feature type="strand" evidence="10">
    <location>
        <begin position="145"/>
        <end position="153"/>
    </location>
</feature>
<feature type="strand" evidence="10">
    <location>
        <begin position="161"/>
        <end position="174"/>
    </location>
</feature>
<feature type="strand" evidence="10">
    <location>
        <begin position="181"/>
        <end position="189"/>
    </location>
</feature>
<feature type="helix" evidence="10">
    <location>
        <begin position="191"/>
        <end position="194"/>
    </location>
</feature>
<feature type="strand" evidence="10">
    <location>
        <begin position="207"/>
        <end position="210"/>
    </location>
</feature>
<feature type="strand" evidence="10">
    <location>
        <begin position="213"/>
        <end position="216"/>
    </location>
</feature>
<organism>
    <name type="scientific">Homo sapiens</name>
    <name type="common">Human</name>
    <dbReference type="NCBI Taxonomy" id="9606"/>
    <lineage>
        <taxon>Eukaryota</taxon>
        <taxon>Metazoa</taxon>
        <taxon>Chordata</taxon>
        <taxon>Craniata</taxon>
        <taxon>Vertebrata</taxon>
        <taxon>Euteleostomi</taxon>
        <taxon>Mammalia</taxon>
        <taxon>Eutheria</taxon>
        <taxon>Euarchontoglires</taxon>
        <taxon>Primates</taxon>
        <taxon>Haplorrhini</taxon>
        <taxon>Catarrhini</taxon>
        <taxon>Hominidae</taxon>
        <taxon>Homo</taxon>
    </lineage>
</organism>
<sequence length="371" mass="42013">MGRLVLLWGAAVFLLGGWMALGQGGAAEGVQIQIIYFNLETVQVTWNASKYSRTNLTFHYRFNGDEAYDQCTNYLLQEGHTSGCLLDAEQRDDILYFSIRNGTHPVFTASRWMVYYLKPSSPKHVRFSWHQDAVTVTCSDLSYGDLLYEVQYRSPFDTEWQSKQENTCNVTIEGLDAEKCYSFWVRVKAMEDVYGPDTYPSDWSEVTCWQRGEIRDACAETPTPPKPKLSKFILISSLAILLMVSLLLLSLWKLWRVKKFLIPSVPDPKSIFPGLFEIHQGNFQEWITDTQNVAHLHKMAGAEQESGPEEPLVVQLAKTEAESPRMLDPQTEEKEASGGSLQLPHQPLQGGDVVTIGGFTFVMNDRSYVAL</sequence>
<name>CRLF2_HUMAN</name>
<keyword id="KW-0002">3D-structure</keyword>
<keyword id="KW-0025">Alternative splicing</keyword>
<keyword id="KW-1003">Cell membrane</keyword>
<keyword id="KW-1015">Disulfide bond</keyword>
<keyword id="KW-0325">Glycoprotein</keyword>
<keyword id="KW-0472">Membrane</keyword>
<keyword id="KW-1267">Proteomics identification</keyword>
<keyword id="KW-0675">Receptor</keyword>
<keyword id="KW-1185">Reference proteome</keyword>
<keyword id="KW-0964">Secreted</keyword>
<keyword id="KW-0732">Signal</keyword>
<keyword id="KW-0812">Transmembrane</keyword>
<keyword id="KW-1133">Transmembrane helix</keyword>
<reference key="1">
    <citation type="journal article" date="2001" name="Biochem. Biophys. Res. Commun.">
        <title>Identification of a novel type I cytokine receptor CRL2 preferentially expressed by human dendritic cells and activated monocytes.</title>
        <authorList>
            <person name="Zhang W."/>
            <person name="Wang J."/>
            <person name="Wang Q."/>
            <person name="Chen G."/>
            <person name="Zhang J."/>
            <person name="Chen T."/>
            <person name="Wan T."/>
            <person name="Zhang Y."/>
            <person name="Cao X."/>
        </authorList>
    </citation>
    <scope>NUCLEOTIDE SEQUENCE [MRNA] (ISOFORM 1)</scope>
    <source>
        <tissue>Dendritic cell</tissue>
    </source>
</reference>
<reference key="2">
    <citation type="journal article" date="2001" name="Cytogenet. Cell Genet.">
        <title>Molecular cloning of a human novel type I cytokine receptor related to delta1/TSLPR.</title>
        <authorList>
            <person name="Tonozuka Y."/>
            <person name="Fujio K."/>
            <person name="Sugiyama T."/>
            <person name="Nosaka T."/>
            <person name="Hirai M."/>
            <person name="Kitamura T."/>
        </authorList>
    </citation>
    <scope>NUCLEOTIDE SEQUENCE [MRNA] (ISOFORM 1)</scope>
    <source>
        <tissue>T-cell</tissue>
    </source>
</reference>
<reference key="3">
    <citation type="journal article" date="2001" name="J. Immunol.">
        <title>Human thymic stromal lymphopoietin preferentially stimulates myeloid cells.</title>
        <authorList>
            <person name="Reche P.A."/>
            <person name="Soumelis V."/>
            <person name="Gorman D.M."/>
            <person name="Clifford T."/>
            <person name="Liu M.-R."/>
            <person name="Travis M."/>
            <person name="Zurawski S.M."/>
            <person name="Johnston J."/>
            <person name="Liu Y.-J."/>
            <person name="Spits H."/>
            <person name="de Waal Malefyt R."/>
            <person name="Kastelein R.A."/>
            <person name="Bazan J.F."/>
        </authorList>
    </citation>
    <scope>NUCLEOTIDE SEQUENCE [MRNA] (ISOFORM 1)</scope>
    <scope>FUNCTION AS A RECEPTOR FOR TSLP</scope>
</reference>
<reference key="4">
    <citation type="submission" date="2004-10" db="EMBL/GenBank/DDBJ databases">
        <title>Human thymic stromal lymphopoietin receptor presents three splicing variants in selected tumor cells and functionally cooperates with IL-2 receptor beta to activate mitogenic signals.</title>
        <authorList>
            <person name="Li T."/>
            <person name="Yu X."/>
            <person name="Cao J."/>
            <person name="Wang S."/>
            <person name="Li X."/>
            <person name="Cui Q."/>
            <person name="Chen J."/>
            <person name="Zhang S."/>
            <person name="Chang Z."/>
            <person name="Fu X."/>
            <person name="Liu L."/>
        </authorList>
    </citation>
    <scope>NUCLEOTIDE SEQUENCE [MRNA] (ISOFORM 3)</scope>
</reference>
<reference key="5">
    <citation type="journal article" date="2004" name="Nat. Genet.">
        <title>Complete sequencing and characterization of 21,243 full-length human cDNAs.</title>
        <authorList>
            <person name="Ota T."/>
            <person name="Suzuki Y."/>
            <person name="Nishikawa T."/>
            <person name="Otsuki T."/>
            <person name="Sugiyama T."/>
            <person name="Irie R."/>
            <person name="Wakamatsu A."/>
            <person name="Hayashi K."/>
            <person name="Sato H."/>
            <person name="Nagai K."/>
            <person name="Kimura K."/>
            <person name="Makita H."/>
            <person name="Sekine M."/>
            <person name="Obayashi M."/>
            <person name="Nishi T."/>
            <person name="Shibahara T."/>
            <person name="Tanaka T."/>
            <person name="Ishii S."/>
            <person name="Yamamoto J."/>
            <person name="Saito K."/>
            <person name="Kawai Y."/>
            <person name="Isono Y."/>
            <person name="Nakamura Y."/>
            <person name="Nagahari K."/>
            <person name="Murakami K."/>
            <person name="Yasuda T."/>
            <person name="Iwayanagi T."/>
            <person name="Wagatsuma M."/>
            <person name="Shiratori A."/>
            <person name="Sudo H."/>
            <person name="Hosoiri T."/>
            <person name="Kaku Y."/>
            <person name="Kodaira H."/>
            <person name="Kondo H."/>
            <person name="Sugawara M."/>
            <person name="Takahashi M."/>
            <person name="Kanda K."/>
            <person name="Yokoi T."/>
            <person name="Furuya T."/>
            <person name="Kikkawa E."/>
            <person name="Omura Y."/>
            <person name="Abe K."/>
            <person name="Kamihara K."/>
            <person name="Katsuta N."/>
            <person name="Sato K."/>
            <person name="Tanikawa M."/>
            <person name="Yamazaki M."/>
            <person name="Ninomiya K."/>
            <person name="Ishibashi T."/>
            <person name="Yamashita H."/>
            <person name="Murakawa K."/>
            <person name="Fujimori K."/>
            <person name="Tanai H."/>
            <person name="Kimata M."/>
            <person name="Watanabe M."/>
            <person name="Hiraoka S."/>
            <person name="Chiba Y."/>
            <person name="Ishida S."/>
            <person name="Ono Y."/>
            <person name="Takiguchi S."/>
            <person name="Watanabe S."/>
            <person name="Yosida M."/>
            <person name="Hotuta T."/>
            <person name="Kusano J."/>
            <person name="Kanehori K."/>
            <person name="Takahashi-Fujii A."/>
            <person name="Hara H."/>
            <person name="Tanase T.-O."/>
            <person name="Nomura Y."/>
            <person name="Togiya S."/>
            <person name="Komai F."/>
            <person name="Hara R."/>
            <person name="Takeuchi K."/>
            <person name="Arita M."/>
            <person name="Imose N."/>
            <person name="Musashino K."/>
            <person name="Yuuki H."/>
            <person name="Oshima A."/>
            <person name="Sasaki N."/>
            <person name="Aotsuka S."/>
            <person name="Yoshikawa Y."/>
            <person name="Matsunawa H."/>
            <person name="Ichihara T."/>
            <person name="Shiohata N."/>
            <person name="Sano S."/>
            <person name="Moriya S."/>
            <person name="Momiyama H."/>
            <person name="Satoh N."/>
            <person name="Takami S."/>
            <person name="Terashima Y."/>
            <person name="Suzuki O."/>
            <person name="Nakagawa S."/>
            <person name="Senoh A."/>
            <person name="Mizoguchi H."/>
            <person name="Goto Y."/>
            <person name="Shimizu F."/>
            <person name="Wakebe H."/>
            <person name="Hishigaki H."/>
            <person name="Watanabe T."/>
            <person name="Sugiyama A."/>
            <person name="Takemoto M."/>
            <person name="Kawakami B."/>
            <person name="Yamazaki M."/>
            <person name="Watanabe K."/>
            <person name="Kumagai A."/>
            <person name="Itakura S."/>
            <person name="Fukuzumi Y."/>
            <person name="Fujimori Y."/>
            <person name="Komiyama M."/>
            <person name="Tashiro H."/>
            <person name="Tanigami A."/>
            <person name="Fujiwara T."/>
            <person name="Ono T."/>
            <person name="Yamada K."/>
            <person name="Fujii Y."/>
            <person name="Ozaki K."/>
            <person name="Hirao M."/>
            <person name="Ohmori Y."/>
            <person name="Kawabata A."/>
            <person name="Hikiji T."/>
            <person name="Kobatake N."/>
            <person name="Inagaki H."/>
            <person name="Ikema Y."/>
            <person name="Okamoto S."/>
            <person name="Okitani R."/>
            <person name="Kawakami T."/>
            <person name="Noguchi S."/>
            <person name="Itoh T."/>
            <person name="Shigeta K."/>
            <person name="Senba T."/>
            <person name="Matsumura K."/>
            <person name="Nakajima Y."/>
            <person name="Mizuno T."/>
            <person name="Morinaga M."/>
            <person name="Sasaki M."/>
            <person name="Togashi T."/>
            <person name="Oyama M."/>
            <person name="Hata H."/>
            <person name="Watanabe M."/>
            <person name="Komatsu T."/>
            <person name="Mizushima-Sugano J."/>
            <person name="Satoh T."/>
            <person name="Shirai Y."/>
            <person name="Takahashi Y."/>
            <person name="Nakagawa K."/>
            <person name="Okumura K."/>
            <person name="Nagase T."/>
            <person name="Nomura N."/>
            <person name="Kikuchi H."/>
            <person name="Masuho Y."/>
            <person name="Yamashita R."/>
            <person name="Nakai K."/>
            <person name="Yada T."/>
            <person name="Nakamura Y."/>
            <person name="Ohara O."/>
            <person name="Isogai T."/>
            <person name="Sugano S."/>
        </authorList>
    </citation>
    <scope>NUCLEOTIDE SEQUENCE [LARGE SCALE MRNA] (ISOFORM 2)</scope>
    <source>
        <tissue>Lung</tissue>
    </source>
</reference>
<reference key="6">
    <citation type="journal article" date="2005" name="Nature">
        <title>The DNA sequence of the human X chromosome.</title>
        <authorList>
            <person name="Ross M.T."/>
            <person name="Grafham D.V."/>
            <person name="Coffey A.J."/>
            <person name="Scherer S."/>
            <person name="McLay K."/>
            <person name="Muzny D."/>
            <person name="Platzer M."/>
            <person name="Howell G.R."/>
            <person name="Burrows C."/>
            <person name="Bird C.P."/>
            <person name="Frankish A."/>
            <person name="Lovell F.L."/>
            <person name="Howe K.L."/>
            <person name="Ashurst J.L."/>
            <person name="Fulton R.S."/>
            <person name="Sudbrak R."/>
            <person name="Wen G."/>
            <person name="Jones M.C."/>
            <person name="Hurles M.E."/>
            <person name="Andrews T.D."/>
            <person name="Scott C.E."/>
            <person name="Searle S."/>
            <person name="Ramser J."/>
            <person name="Whittaker A."/>
            <person name="Deadman R."/>
            <person name="Carter N.P."/>
            <person name="Hunt S.E."/>
            <person name="Chen R."/>
            <person name="Cree A."/>
            <person name="Gunaratne P."/>
            <person name="Havlak P."/>
            <person name="Hodgson A."/>
            <person name="Metzker M.L."/>
            <person name="Richards S."/>
            <person name="Scott G."/>
            <person name="Steffen D."/>
            <person name="Sodergren E."/>
            <person name="Wheeler D.A."/>
            <person name="Worley K.C."/>
            <person name="Ainscough R."/>
            <person name="Ambrose K.D."/>
            <person name="Ansari-Lari M.A."/>
            <person name="Aradhya S."/>
            <person name="Ashwell R.I."/>
            <person name="Babbage A.K."/>
            <person name="Bagguley C.L."/>
            <person name="Ballabio A."/>
            <person name="Banerjee R."/>
            <person name="Barker G.E."/>
            <person name="Barlow K.F."/>
            <person name="Barrett I.P."/>
            <person name="Bates K.N."/>
            <person name="Beare D.M."/>
            <person name="Beasley H."/>
            <person name="Beasley O."/>
            <person name="Beck A."/>
            <person name="Bethel G."/>
            <person name="Blechschmidt K."/>
            <person name="Brady N."/>
            <person name="Bray-Allen S."/>
            <person name="Bridgeman A.M."/>
            <person name="Brown A.J."/>
            <person name="Brown M.J."/>
            <person name="Bonnin D."/>
            <person name="Bruford E.A."/>
            <person name="Buhay C."/>
            <person name="Burch P."/>
            <person name="Burford D."/>
            <person name="Burgess J."/>
            <person name="Burrill W."/>
            <person name="Burton J."/>
            <person name="Bye J.M."/>
            <person name="Carder C."/>
            <person name="Carrel L."/>
            <person name="Chako J."/>
            <person name="Chapman J.C."/>
            <person name="Chavez D."/>
            <person name="Chen E."/>
            <person name="Chen G."/>
            <person name="Chen Y."/>
            <person name="Chen Z."/>
            <person name="Chinault C."/>
            <person name="Ciccodicola A."/>
            <person name="Clark S.Y."/>
            <person name="Clarke G."/>
            <person name="Clee C.M."/>
            <person name="Clegg S."/>
            <person name="Clerc-Blankenburg K."/>
            <person name="Clifford K."/>
            <person name="Cobley V."/>
            <person name="Cole C.G."/>
            <person name="Conquer J.S."/>
            <person name="Corby N."/>
            <person name="Connor R.E."/>
            <person name="David R."/>
            <person name="Davies J."/>
            <person name="Davis C."/>
            <person name="Davis J."/>
            <person name="Delgado O."/>
            <person name="Deshazo D."/>
            <person name="Dhami P."/>
            <person name="Ding Y."/>
            <person name="Dinh H."/>
            <person name="Dodsworth S."/>
            <person name="Draper H."/>
            <person name="Dugan-Rocha S."/>
            <person name="Dunham A."/>
            <person name="Dunn M."/>
            <person name="Durbin K.J."/>
            <person name="Dutta I."/>
            <person name="Eades T."/>
            <person name="Ellwood M."/>
            <person name="Emery-Cohen A."/>
            <person name="Errington H."/>
            <person name="Evans K.L."/>
            <person name="Faulkner L."/>
            <person name="Francis F."/>
            <person name="Frankland J."/>
            <person name="Fraser A.E."/>
            <person name="Galgoczy P."/>
            <person name="Gilbert J."/>
            <person name="Gill R."/>
            <person name="Gloeckner G."/>
            <person name="Gregory S.G."/>
            <person name="Gribble S."/>
            <person name="Griffiths C."/>
            <person name="Grocock R."/>
            <person name="Gu Y."/>
            <person name="Gwilliam R."/>
            <person name="Hamilton C."/>
            <person name="Hart E.A."/>
            <person name="Hawes A."/>
            <person name="Heath P.D."/>
            <person name="Heitmann K."/>
            <person name="Hennig S."/>
            <person name="Hernandez J."/>
            <person name="Hinzmann B."/>
            <person name="Ho S."/>
            <person name="Hoffs M."/>
            <person name="Howden P.J."/>
            <person name="Huckle E.J."/>
            <person name="Hume J."/>
            <person name="Hunt P.J."/>
            <person name="Hunt A.R."/>
            <person name="Isherwood J."/>
            <person name="Jacob L."/>
            <person name="Johnson D."/>
            <person name="Jones S."/>
            <person name="de Jong P.J."/>
            <person name="Joseph S.S."/>
            <person name="Keenan S."/>
            <person name="Kelly S."/>
            <person name="Kershaw J.K."/>
            <person name="Khan Z."/>
            <person name="Kioschis P."/>
            <person name="Klages S."/>
            <person name="Knights A.J."/>
            <person name="Kosiura A."/>
            <person name="Kovar-Smith C."/>
            <person name="Laird G.K."/>
            <person name="Langford C."/>
            <person name="Lawlor S."/>
            <person name="Leversha M."/>
            <person name="Lewis L."/>
            <person name="Liu W."/>
            <person name="Lloyd C."/>
            <person name="Lloyd D.M."/>
            <person name="Loulseged H."/>
            <person name="Loveland J.E."/>
            <person name="Lovell J.D."/>
            <person name="Lozado R."/>
            <person name="Lu J."/>
            <person name="Lyne R."/>
            <person name="Ma J."/>
            <person name="Maheshwari M."/>
            <person name="Matthews L.H."/>
            <person name="McDowall J."/>
            <person name="McLaren S."/>
            <person name="McMurray A."/>
            <person name="Meidl P."/>
            <person name="Meitinger T."/>
            <person name="Milne S."/>
            <person name="Miner G."/>
            <person name="Mistry S.L."/>
            <person name="Morgan M."/>
            <person name="Morris S."/>
            <person name="Mueller I."/>
            <person name="Mullikin J.C."/>
            <person name="Nguyen N."/>
            <person name="Nordsiek G."/>
            <person name="Nyakatura G."/>
            <person name="O'dell C.N."/>
            <person name="Okwuonu G."/>
            <person name="Palmer S."/>
            <person name="Pandian R."/>
            <person name="Parker D."/>
            <person name="Parrish J."/>
            <person name="Pasternak S."/>
            <person name="Patel D."/>
            <person name="Pearce A.V."/>
            <person name="Pearson D.M."/>
            <person name="Pelan S.E."/>
            <person name="Perez L."/>
            <person name="Porter K.M."/>
            <person name="Ramsey Y."/>
            <person name="Reichwald K."/>
            <person name="Rhodes S."/>
            <person name="Ridler K.A."/>
            <person name="Schlessinger D."/>
            <person name="Schueler M.G."/>
            <person name="Sehra H.K."/>
            <person name="Shaw-Smith C."/>
            <person name="Shen H."/>
            <person name="Sheridan E.M."/>
            <person name="Shownkeen R."/>
            <person name="Skuce C.D."/>
            <person name="Smith M.L."/>
            <person name="Sotheran E.C."/>
            <person name="Steingruber H.E."/>
            <person name="Steward C.A."/>
            <person name="Storey R."/>
            <person name="Swann R.M."/>
            <person name="Swarbreck D."/>
            <person name="Tabor P.E."/>
            <person name="Taudien S."/>
            <person name="Taylor T."/>
            <person name="Teague B."/>
            <person name="Thomas K."/>
            <person name="Thorpe A."/>
            <person name="Timms K."/>
            <person name="Tracey A."/>
            <person name="Trevanion S."/>
            <person name="Tromans A.C."/>
            <person name="d'Urso M."/>
            <person name="Verduzco D."/>
            <person name="Villasana D."/>
            <person name="Waldron L."/>
            <person name="Wall M."/>
            <person name="Wang Q."/>
            <person name="Warren J."/>
            <person name="Warry G.L."/>
            <person name="Wei X."/>
            <person name="West A."/>
            <person name="Whitehead S.L."/>
            <person name="Whiteley M.N."/>
            <person name="Wilkinson J.E."/>
            <person name="Willey D.L."/>
            <person name="Williams G."/>
            <person name="Williams L."/>
            <person name="Williamson A."/>
            <person name="Williamson H."/>
            <person name="Wilming L."/>
            <person name="Woodmansey R.L."/>
            <person name="Wray P.W."/>
            <person name="Yen J."/>
            <person name="Zhang J."/>
            <person name="Zhou J."/>
            <person name="Zoghbi H."/>
            <person name="Zorilla S."/>
            <person name="Buck D."/>
            <person name="Reinhardt R."/>
            <person name="Poustka A."/>
            <person name="Rosenthal A."/>
            <person name="Lehrach H."/>
            <person name="Meindl A."/>
            <person name="Minx P.J."/>
            <person name="Hillier L.W."/>
            <person name="Willard H.F."/>
            <person name="Wilson R.K."/>
            <person name="Waterston R.H."/>
            <person name="Rice C.M."/>
            <person name="Vaudin M."/>
            <person name="Coulson A."/>
            <person name="Nelson D.L."/>
            <person name="Weinstock G."/>
            <person name="Sulston J.E."/>
            <person name="Durbin R.M."/>
            <person name="Hubbard T."/>
            <person name="Gibbs R.A."/>
            <person name="Beck S."/>
            <person name="Rogers J."/>
            <person name="Bentley D.R."/>
        </authorList>
    </citation>
    <scope>NUCLEOTIDE SEQUENCE [LARGE SCALE GENOMIC DNA]</scope>
</reference>
<proteinExistence type="evidence at protein level"/>
<comment type="function">
    <text evidence="1 6">Receptor for thymic stromal lymphopoietin (TSLP). Forms a functional complex with TSLP and IL7R which is capable of stimulating cell proliferation through activation of STAT3 and STAT5. Also activates JAK2 (By similarity). Implicated in the development of the hematopoietic system.</text>
</comment>
<comment type="subunit">
    <text>Heterodimer of CRLF2 and IL7R.</text>
</comment>
<comment type="subcellular location">
    <molecule>Isoform 1</molecule>
    <subcellularLocation>
        <location evidence="9">Cell membrane</location>
        <topology evidence="9">Single-pass type I membrane protein</topology>
    </subcellularLocation>
</comment>
<comment type="subcellular location">
    <molecule>Isoform 2</molecule>
    <subcellularLocation>
        <location evidence="9">Secreted</location>
    </subcellularLocation>
</comment>
<comment type="alternative products">
    <event type="alternative splicing"/>
    <isoform>
        <id>Q9HC73-1</id>
        <name>1</name>
        <sequence type="displayed"/>
    </isoform>
    <isoform>
        <id>Q9HC73-2</id>
        <name>2</name>
        <sequence type="described" ref="VSP_008786 VSP_008787"/>
    </isoform>
    <isoform>
        <id>Q9HC73-3</id>
        <name>3</name>
        <sequence type="described" ref="VSP_057463"/>
    </isoform>
</comment>
<comment type="tissue specificity">
    <text>Expressed in heart, skeletal muscle, kidney and adult and fetal liver. Primarily expressed in dendrites and monocytes. Weakly expressed in T-cells.</text>
</comment>
<comment type="induction">
    <text>Up-regulated in activated peripheral monocytes and THP-1 cells.</text>
</comment>
<comment type="domain">
    <text>The WSXWS motif appears to be necessary for proper protein folding and thereby efficient intracellular transport and cell-surface receptor binding.</text>
</comment>
<comment type="domain">
    <text>The box 1 motif is important for association with JAKs.</text>
</comment>
<comment type="miscellaneous">
    <text>The gene coding for this protein is located in the pseudoautosomal region 1 (PAR1) of X and Y chromosomes.</text>
</comment>
<comment type="similarity">
    <text evidence="9">Belongs to the type I cytokine receptor family. Type 5 subfamily.</text>
</comment>
<evidence type="ECO:0000250" key="1"/>
<evidence type="ECO:0000250" key="2">
    <source>
        <dbReference type="UniProtKB" id="Q8CII9"/>
    </source>
</evidence>
<evidence type="ECO:0000255" key="3"/>
<evidence type="ECO:0000255" key="4">
    <source>
        <dbReference type="PROSITE-ProRule" id="PRU00316"/>
    </source>
</evidence>
<evidence type="ECO:0000256" key="5">
    <source>
        <dbReference type="SAM" id="MobiDB-lite"/>
    </source>
</evidence>
<evidence type="ECO:0000269" key="6">
    <source>
    </source>
</evidence>
<evidence type="ECO:0000303" key="7">
    <source>
    </source>
</evidence>
<evidence type="ECO:0000303" key="8">
    <source ref="4"/>
</evidence>
<evidence type="ECO:0000305" key="9"/>
<evidence type="ECO:0007829" key="10">
    <source>
        <dbReference type="PDB" id="5J11"/>
    </source>
</evidence>
<gene>
    <name type="primary">CRLF2</name>
    <name type="synonym">CRL2</name>
    <name type="synonym">ILXR</name>
    <name type="synonym">TSLPR</name>
</gene>
<protein>
    <recommendedName>
        <fullName>Cytokine receptor-like factor 2</fullName>
    </recommendedName>
    <alternativeName>
        <fullName>Cytokine receptor-like 2</fullName>
    </alternativeName>
    <alternativeName>
        <fullName>IL-XR</fullName>
    </alternativeName>
    <alternativeName>
        <fullName>Thymic stromal lymphopoietin protein receptor</fullName>
        <shortName>TSLP receptor</shortName>
    </alternativeName>
</protein>
<accession>Q9HC73</accession>
<accession>J3QKD1</accession>
<accession>Q5G7M1</accession>
<accession>Q9H5R3</accession>
<dbReference type="EMBL" id="AF142570">
    <property type="protein sequence ID" value="AAG27923.1"/>
    <property type="molecule type" value="mRNA"/>
</dbReference>
<dbReference type="EMBL" id="AB052639">
    <property type="protein sequence ID" value="BAB60717.1"/>
    <property type="molecule type" value="mRNA"/>
</dbReference>
<dbReference type="EMBL" id="AF338733">
    <property type="protein sequence ID" value="AAK60618.1"/>
    <property type="molecule type" value="mRNA"/>
</dbReference>
<dbReference type="EMBL" id="AY775789">
    <property type="protein sequence ID" value="AAW66851.1"/>
    <property type="molecule type" value="mRNA"/>
</dbReference>
<dbReference type="EMBL" id="AK026800">
    <property type="protein sequence ID" value="BAB15557.1"/>
    <property type="molecule type" value="mRNA"/>
</dbReference>
<dbReference type="EMBL" id="AC188046">
    <property type="status" value="NOT_ANNOTATED_CDS"/>
    <property type="molecule type" value="Genomic_DNA"/>
</dbReference>
<dbReference type="EMBL" id="BX908382">
    <property type="status" value="NOT_ANNOTATED_CDS"/>
    <property type="molecule type" value="Genomic_DNA"/>
</dbReference>
<dbReference type="CCDS" id="CCDS75944.1">
    <molecule id="Q9HC73-3"/>
</dbReference>
<dbReference type="CCDS" id="CCDS75945.1">
    <molecule id="Q9HC73-1"/>
</dbReference>
<dbReference type="RefSeq" id="NP_001012288.2">
    <molecule id="Q9HC73-3"/>
    <property type="nucleotide sequence ID" value="NM_001012288.3"/>
</dbReference>
<dbReference type="RefSeq" id="NP_071431.2">
    <molecule id="Q9HC73-1"/>
    <property type="nucleotide sequence ID" value="NM_022148.3"/>
</dbReference>
<dbReference type="PDB" id="5J11">
    <property type="method" value="X-ray"/>
    <property type="resolution" value="2.56 A"/>
    <property type="chains" value="C=1-221"/>
</dbReference>
<dbReference type="PDB" id="5J12">
    <property type="method" value="X-ray"/>
    <property type="resolution" value="3.55 A"/>
    <property type="chains" value="C=1-221"/>
</dbReference>
<dbReference type="PDBsum" id="5J11"/>
<dbReference type="PDBsum" id="5J12"/>
<dbReference type="SASBDB" id="Q9HC73"/>
<dbReference type="SMR" id="Q9HC73"/>
<dbReference type="BioGRID" id="122066">
    <property type="interactions" value="71"/>
</dbReference>
<dbReference type="CORUM" id="Q9HC73"/>
<dbReference type="FunCoup" id="Q9HC73">
    <property type="interactions" value="380"/>
</dbReference>
<dbReference type="IntAct" id="Q9HC73">
    <property type="interactions" value="57"/>
</dbReference>
<dbReference type="STRING" id="9606.ENSP00000370978"/>
<dbReference type="GlyCosmos" id="Q9HC73">
    <property type="glycosylation" value="4 sites, No reported glycans"/>
</dbReference>
<dbReference type="GlyGen" id="Q9HC73">
    <property type="glycosylation" value="5 sites, 1 N-linked glycan (1 site)"/>
</dbReference>
<dbReference type="iPTMnet" id="Q9HC73"/>
<dbReference type="PhosphoSitePlus" id="Q9HC73"/>
<dbReference type="BioMuta" id="CRLF2"/>
<dbReference type="DMDM" id="38257768"/>
<dbReference type="MassIVE" id="Q9HC73"/>
<dbReference type="PaxDb" id="9606-ENSP00000383641"/>
<dbReference type="PeptideAtlas" id="Q9HC73"/>
<dbReference type="Antibodypedia" id="23333">
    <property type="antibodies" value="546 antibodies from 35 providers"/>
</dbReference>
<dbReference type="DNASU" id="64109"/>
<dbReference type="Ensembl" id="ENST00000381567.8">
    <molecule id="Q9HC73-3"/>
    <property type="protein sequence ID" value="ENSP00000370979.4"/>
    <property type="gene ID" value="ENSG00000205755.13"/>
</dbReference>
<dbReference type="Ensembl" id="ENST00000400841.8">
    <molecule id="Q9HC73-1"/>
    <property type="protein sequence ID" value="ENSP00000383641.3"/>
    <property type="gene ID" value="ENSG00000205755.13"/>
</dbReference>
<dbReference type="Ensembl" id="ENST00000711254.1">
    <molecule id="Q9HC73-1"/>
    <property type="protein sequence ID" value="ENSP00000518625.1"/>
    <property type="gene ID" value="ENSG00000292363.1"/>
</dbReference>
<dbReference type="Ensembl" id="ENST00000711256.1">
    <molecule id="Q9HC73-3"/>
    <property type="protein sequence ID" value="ENSP00000518623.1"/>
    <property type="gene ID" value="ENSG00000292363.1"/>
</dbReference>
<dbReference type="GeneID" id="64109"/>
<dbReference type="KEGG" id="hsa:64109"/>
<dbReference type="MANE-Select" id="ENST00000400841.8">
    <property type="protein sequence ID" value="ENSP00000383641.3"/>
    <property type="RefSeq nucleotide sequence ID" value="NM_022148.4"/>
    <property type="RefSeq protein sequence ID" value="NP_071431.2"/>
</dbReference>
<dbReference type="UCSC" id="uc004cpl.4">
    <property type="organism name" value="human"/>
</dbReference>
<dbReference type="UCSC" id="uc022brs.3">
    <molecule id="Q9HC73-1"/>
    <property type="organism name" value="human"/>
</dbReference>
<dbReference type="AGR" id="HGNC:14281"/>
<dbReference type="CTD" id="64109"/>
<dbReference type="DisGeNET" id="64109"/>
<dbReference type="GeneCards" id="CRLF2"/>
<dbReference type="HGNC" id="HGNC:14281">
    <property type="gene designation" value="CRLF2"/>
</dbReference>
<dbReference type="HPA" id="ENSG00000205755">
    <property type="expression patterns" value="Tissue enhanced (bone marrow, gallbladder, lymphoid tissue)"/>
</dbReference>
<dbReference type="MalaCards" id="CRLF2"/>
<dbReference type="MIM" id="300357">
    <property type="type" value="gene"/>
</dbReference>
<dbReference type="MIM" id="400023">
    <property type="type" value="gene"/>
</dbReference>
<dbReference type="neXtProt" id="NX_Q9HC73"/>
<dbReference type="OpenTargets" id="ENSG00000205755"/>
<dbReference type="PharmGKB" id="PA26883"/>
<dbReference type="VEuPathDB" id="HostDB:ENSG00000205755"/>
<dbReference type="eggNOG" id="ENOG502RYG2">
    <property type="taxonomic scope" value="Eukaryota"/>
</dbReference>
<dbReference type="GeneTree" id="ENSGT00510000049974"/>
<dbReference type="HOGENOM" id="CLU_060544_0_0_1"/>
<dbReference type="InParanoid" id="Q9HC73"/>
<dbReference type="OMA" id="DLNFQWH"/>
<dbReference type="OrthoDB" id="8803253at2759"/>
<dbReference type="PAN-GO" id="Q9HC73">
    <property type="GO annotations" value="8 GO annotations based on evolutionary models"/>
</dbReference>
<dbReference type="PhylomeDB" id="Q9HC73"/>
<dbReference type="TreeFam" id="TF342693"/>
<dbReference type="PathwayCommons" id="Q9HC73"/>
<dbReference type="Reactome" id="R-HSA-1266695">
    <property type="pathway name" value="Interleukin-7 signaling"/>
</dbReference>
<dbReference type="SignaLink" id="Q9HC73"/>
<dbReference type="SIGNOR" id="Q9HC73"/>
<dbReference type="BioGRID-ORCS" id="64109">
    <property type="hits" value="3 hits in 207 CRISPR screens"/>
</dbReference>
<dbReference type="ChiTaRS" id="CRLF2">
    <property type="organism name" value="human"/>
</dbReference>
<dbReference type="GenomeRNAi" id="64109"/>
<dbReference type="Pharos" id="Q9HC73">
    <property type="development level" value="Tbio"/>
</dbReference>
<dbReference type="PRO" id="PR:Q9HC73"/>
<dbReference type="Proteomes" id="UP000005640">
    <property type="component" value="Chromosome X"/>
</dbReference>
<dbReference type="Proteomes" id="UP000005640">
    <property type="component" value="Chromosome Y"/>
</dbReference>
<dbReference type="RNAct" id="Q9HC73">
    <property type="molecule type" value="protein"/>
</dbReference>
<dbReference type="Bgee" id="ENSG00000205755">
    <property type="expression patterns" value="Expressed in male germ line stem cell (sensu Vertebrata) in testis and 48 other cell types or tissues"/>
</dbReference>
<dbReference type="ExpressionAtlas" id="Q9HC73">
    <property type="expression patterns" value="baseline and differential"/>
</dbReference>
<dbReference type="GO" id="GO:0009897">
    <property type="term" value="C:external side of plasma membrane"/>
    <property type="evidence" value="ECO:0000318"/>
    <property type="project" value="GO_Central"/>
</dbReference>
<dbReference type="GO" id="GO:0005576">
    <property type="term" value="C:extracellular region"/>
    <property type="evidence" value="ECO:0007669"/>
    <property type="project" value="UniProtKB-SubCell"/>
</dbReference>
<dbReference type="GO" id="GO:0005886">
    <property type="term" value="C:plasma membrane"/>
    <property type="evidence" value="ECO:0000304"/>
    <property type="project" value="Reactome"/>
</dbReference>
<dbReference type="GO" id="GO:0043235">
    <property type="term" value="C:receptor complex"/>
    <property type="evidence" value="ECO:0000318"/>
    <property type="project" value="GO_Central"/>
</dbReference>
<dbReference type="GO" id="GO:0015026">
    <property type="term" value="F:coreceptor activity"/>
    <property type="evidence" value="ECO:0000314"/>
    <property type="project" value="UniProt"/>
</dbReference>
<dbReference type="GO" id="GO:0019955">
    <property type="term" value="F:cytokine binding"/>
    <property type="evidence" value="ECO:0000318"/>
    <property type="project" value="GO_Central"/>
</dbReference>
<dbReference type="GO" id="GO:0004896">
    <property type="term" value="F:cytokine receptor activity"/>
    <property type="evidence" value="ECO:0000314"/>
    <property type="project" value="UniProtKB"/>
</dbReference>
<dbReference type="GO" id="GO:0019221">
    <property type="term" value="P:cytokine-mediated signaling pathway"/>
    <property type="evidence" value="ECO:0000314"/>
    <property type="project" value="UniProtKB"/>
</dbReference>
<dbReference type="GO" id="GO:0008284">
    <property type="term" value="P:positive regulation of cell population proliferation"/>
    <property type="evidence" value="ECO:0000314"/>
    <property type="project" value="UniProtKB"/>
</dbReference>
<dbReference type="GO" id="GO:0032754">
    <property type="term" value="P:positive regulation of interleukin-5 production"/>
    <property type="evidence" value="ECO:0000315"/>
    <property type="project" value="UniProtKB"/>
</dbReference>
<dbReference type="GO" id="GO:0033005">
    <property type="term" value="P:positive regulation of mast cell activation"/>
    <property type="evidence" value="ECO:0000315"/>
    <property type="project" value="UniProtKB"/>
</dbReference>
<dbReference type="GO" id="GO:1904894">
    <property type="term" value="P:positive regulation of receptor signaling pathway via STAT"/>
    <property type="evidence" value="ECO:0000314"/>
    <property type="project" value="UniProtKB"/>
</dbReference>
<dbReference type="CDD" id="cd00063">
    <property type="entry name" value="FN3"/>
    <property type="match status" value="1"/>
</dbReference>
<dbReference type="FunFam" id="2.60.40.10:FF:002401">
    <property type="entry name" value="Cytokine receptor like factor 2"/>
    <property type="match status" value="1"/>
</dbReference>
<dbReference type="FunFam" id="2.60.40.10:FF:001547">
    <property type="entry name" value="Cytokine receptor-like factor 2"/>
    <property type="match status" value="1"/>
</dbReference>
<dbReference type="Gene3D" id="2.60.40.10">
    <property type="entry name" value="Immunoglobulins"/>
    <property type="match status" value="2"/>
</dbReference>
<dbReference type="InterPro" id="IPR048648">
    <property type="entry name" value="CRLF2-like_D2"/>
</dbReference>
<dbReference type="InterPro" id="IPR003961">
    <property type="entry name" value="FN3_dom"/>
</dbReference>
<dbReference type="InterPro" id="IPR036116">
    <property type="entry name" value="FN3_sf"/>
</dbReference>
<dbReference type="InterPro" id="IPR013783">
    <property type="entry name" value="Ig-like_fold"/>
</dbReference>
<dbReference type="InterPro" id="IPR053856">
    <property type="entry name" value="TSLPR_D1"/>
</dbReference>
<dbReference type="PANTHER" id="PTHR23037">
    <property type="entry name" value="CYTOKINE RECEPTOR"/>
    <property type="match status" value="1"/>
</dbReference>
<dbReference type="PANTHER" id="PTHR23037:SF35">
    <property type="entry name" value="FIBRONECTIN TYPE-III DOMAIN-CONTAINING PROTEIN"/>
    <property type="match status" value="1"/>
</dbReference>
<dbReference type="Pfam" id="PF21605">
    <property type="entry name" value="CRLF2-like_D2"/>
    <property type="match status" value="1"/>
</dbReference>
<dbReference type="Pfam" id="PF22012">
    <property type="entry name" value="TSLPR_D1"/>
    <property type="match status" value="1"/>
</dbReference>
<dbReference type="SUPFAM" id="SSF49265">
    <property type="entry name" value="Fibronectin type III"/>
    <property type="match status" value="2"/>
</dbReference>
<dbReference type="PROSITE" id="PS50853">
    <property type="entry name" value="FN3"/>
    <property type="match status" value="1"/>
</dbReference>